<keyword id="KW-0007">Acetylation</keyword>
<keyword id="KW-0143">Chaperone</keyword>
<keyword id="KW-0256">Endoplasmic reticulum</keyword>
<keyword id="KW-0325">Glycoprotein</keyword>
<keyword id="KW-0597">Phosphoprotein</keyword>
<keyword id="KW-1185">Reference proteome</keyword>
<keyword id="KW-0732">Signal</keyword>
<gene>
    <name type="primary">SERPINH1</name>
</gene>
<organism>
    <name type="scientific">Bos taurus</name>
    <name type="common">Bovine</name>
    <dbReference type="NCBI Taxonomy" id="9913"/>
    <lineage>
        <taxon>Eukaryota</taxon>
        <taxon>Metazoa</taxon>
        <taxon>Chordata</taxon>
        <taxon>Craniata</taxon>
        <taxon>Vertebrata</taxon>
        <taxon>Euteleostomi</taxon>
        <taxon>Mammalia</taxon>
        <taxon>Eutheria</taxon>
        <taxon>Laurasiatheria</taxon>
        <taxon>Artiodactyla</taxon>
        <taxon>Ruminantia</taxon>
        <taxon>Pecora</taxon>
        <taxon>Bovidae</taxon>
        <taxon>Bovinae</taxon>
        <taxon>Bos</taxon>
    </lineage>
</organism>
<evidence type="ECO:0000250" key="1"/>
<evidence type="ECO:0000250" key="2">
    <source>
        <dbReference type="UniProtKB" id="P19324"/>
    </source>
</evidence>
<evidence type="ECO:0000250" key="3">
    <source>
        <dbReference type="UniProtKB" id="P50454"/>
    </source>
</evidence>
<evidence type="ECO:0000255" key="4"/>
<evidence type="ECO:0000255" key="5">
    <source>
        <dbReference type="PROSITE-ProRule" id="PRU10138"/>
    </source>
</evidence>
<evidence type="ECO:0000305" key="6"/>
<comment type="function">
    <text evidence="1">Binds specifically to collagen. Could be involved as a chaperone in the biosynthetic pathway of collagen (By similarity).</text>
</comment>
<comment type="subcellular location">
    <subcellularLocation>
        <location evidence="5">Endoplasmic reticulum lumen</location>
    </subcellularLocation>
</comment>
<comment type="similarity">
    <text evidence="6">Belongs to the serpin family.</text>
</comment>
<reference key="1">
    <citation type="submission" date="2005-09" db="EMBL/GenBank/DDBJ databases">
        <authorList>
            <consortium name="NIH - Mammalian Gene Collection (MGC) project"/>
        </authorList>
    </citation>
    <scope>NUCLEOTIDE SEQUENCE [LARGE SCALE MRNA]</scope>
    <source>
        <strain>Crossbred X Angus</strain>
        <tissue>Ileum</tissue>
    </source>
</reference>
<feature type="signal peptide" evidence="4">
    <location>
        <begin position="1"/>
        <end position="18"/>
    </location>
</feature>
<feature type="chain" id="PRO_0000253604" description="Serpin H1">
    <location>
        <begin position="19"/>
        <end position="418"/>
    </location>
</feature>
<feature type="short sequence motif" description="Prevents secretion from ER" evidence="5">
    <location>
        <begin position="415"/>
        <end position="418"/>
    </location>
</feature>
<feature type="site" description="Reactive bond homolog" evidence="1">
    <location>
        <begin position="377"/>
        <end position="378"/>
    </location>
</feature>
<feature type="modified residue" description="N6-succinyllysine" evidence="2">
    <location>
        <position position="94"/>
    </location>
</feature>
<feature type="modified residue" description="Phosphoserine" evidence="3">
    <location>
        <position position="141"/>
    </location>
</feature>
<feature type="modified residue" description="N6-acetyllysine" evidence="2">
    <location>
        <position position="207"/>
    </location>
</feature>
<feature type="modified residue" description="N6-succinyllysine" evidence="2">
    <location>
        <position position="296"/>
    </location>
</feature>
<feature type="modified residue" description="N6-acetyllysine" evidence="2">
    <location>
        <position position="319"/>
    </location>
</feature>
<feature type="glycosylation site" description="N-linked (GlcNAc...) asparagine" evidence="4">
    <location>
        <position position="120"/>
    </location>
</feature>
<feature type="glycosylation site" description="N-linked (GlcNAc...) asparagine" evidence="4">
    <location>
        <position position="125"/>
    </location>
</feature>
<sequence length="418" mass="46507">MRALLLISTICLLARALAAEVKKPAAAAAPGTAEKLSPKAATLAERSAGLAFSLYQAMAKDQAVENILLSPVVVASSLGLVSLGGKAATASQAKAVLSAEQLRDDEVHAGLGELLRSLSNSTARNVTWKLGSRLYGPSSVSFAEDFVRSSKQHYNCEHSKINFRDKRSALQSINEWAAQTTDGKLPEVTKDVERTDGALLVNAMFFKPHWDERFHHKMVDNRGFMVTRSYTVGVTMMHRTGLYNYYDDEKEKLQMVEMPLAHKLSSLIIIMPHHVEPLERLEKLLTKEQLKVWMGKMQKKAVAISLPKGVVEVTHDLQKHLAGLGLTEAIDKNKADLSRMSGKKDLYLASVFHATAFEWDTDGNPFDQDIYGREELRSPKLFYADHPFIFLVRDTQSGSLLFIGRLVRPKGDKMRDEL</sequence>
<proteinExistence type="evidence at transcript level"/>
<name>SERPH_BOVIN</name>
<accession>Q2KJH6</accession>
<protein>
    <recommendedName>
        <fullName>Serpin H1</fullName>
    </recommendedName>
    <alternativeName>
        <fullName>Collagen-binding protein</fullName>
        <shortName>Colligin</shortName>
    </alternativeName>
</protein>
<dbReference type="EMBL" id="BC105338">
    <property type="protein sequence ID" value="AAI05339.1"/>
    <property type="molecule type" value="mRNA"/>
</dbReference>
<dbReference type="RefSeq" id="NP_001039528.1">
    <property type="nucleotide sequence ID" value="NM_001046063.2"/>
</dbReference>
<dbReference type="RefSeq" id="XP_005216304.1">
    <property type="nucleotide sequence ID" value="XM_005216247.2"/>
</dbReference>
<dbReference type="RefSeq" id="XP_005216305.1">
    <property type="nucleotide sequence ID" value="XM_005216248.5"/>
</dbReference>
<dbReference type="SMR" id="Q2KJH6"/>
<dbReference type="FunCoup" id="Q2KJH6">
    <property type="interactions" value="825"/>
</dbReference>
<dbReference type="STRING" id="9913.ENSBTAP00000072322"/>
<dbReference type="MEROPS" id="I04.035"/>
<dbReference type="GlyCosmos" id="Q2KJH6">
    <property type="glycosylation" value="2 sites, No reported glycans"/>
</dbReference>
<dbReference type="GlyGen" id="Q2KJH6">
    <property type="glycosylation" value="2 sites"/>
</dbReference>
<dbReference type="SwissPalm" id="Q2KJH6"/>
<dbReference type="PaxDb" id="9913-ENSBTAP00000039506"/>
<dbReference type="PeptideAtlas" id="Q2KJH6"/>
<dbReference type="Ensembl" id="ENSBTAT00000039717.4">
    <property type="protein sequence ID" value="ENSBTAP00000039506.2"/>
    <property type="gene ID" value="ENSBTAG00000001027.5"/>
</dbReference>
<dbReference type="GeneID" id="510850"/>
<dbReference type="KEGG" id="bta:510850"/>
<dbReference type="CTD" id="871"/>
<dbReference type="VEuPathDB" id="HostDB:ENSBTAG00000001027"/>
<dbReference type="VGNC" id="VGNC:34480">
    <property type="gene designation" value="SERPINH1"/>
</dbReference>
<dbReference type="eggNOG" id="KOG2392">
    <property type="taxonomic scope" value="Eukaryota"/>
</dbReference>
<dbReference type="GeneTree" id="ENSGT00940000156163"/>
<dbReference type="HOGENOM" id="CLU_023330_2_0_1"/>
<dbReference type="InParanoid" id="Q2KJH6"/>
<dbReference type="OMA" id="WDEKFHE"/>
<dbReference type="OrthoDB" id="671595at2759"/>
<dbReference type="TreeFam" id="TF343094"/>
<dbReference type="Reactome" id="R-BTA-1650814">
    <property type="pathway name" value="Collagen biosynthesis and modifying enzymes"/>
</dbReference>
<dbReference type="Proteomes" id="UP000009136">
    <property type="component" value="Chromosome 15"/>
</dbReference>
<dbReference type="Bgee" id="ENSBTAG00000001027">
    <property type="expression patterns" value="Expressed in diaphragm and 104 other cell types or tissues"/>
</dbReference>
<dbReference type="GO" id="GO:0005783">
    <property type="term" value="C:endoplasmic reticulum"/>
    <property type="evidence" value="ECO:0000318"/>
    <property type="project" value="GO_Central"/>
</dbReference>
<dbReference type="GO" id="GO:0005788">
    <property type="term" value="C:endoplasmic reticulum lumen"/>
    <property type="evidence" value="ECO:0007669"/>
    <property type="project" value="UniProtKB-SubCell"/>
</dbReference>
<dbReference type="GO" id="GO:0005793">
    <property type="term" value="C:endoplasmic reticulum-Golgi intermediate compartment"/>
    <property type="evidence" value="ECO:0007669"/>
    <property type="project" value="Ensembl"/>
</dbReference>
<dbReference type="GO" id="GO:0005615">
    <property type="term" value="C:extracellular space"/>
    <property type="evidence" value="ECO:0007669"/>
    <property type="project" value="InterPro"/>
</dbReference>
<dbReference type="GO" id="GO:0045121">
    <property type="term" value="C:membrane raft"/>
    <property type="evidence" value="ECO:0007669"/>
    <property type="project" value="Ensembl"/>
</dbReference>
<dbReference type="GO" id="GO:0005518">
    <property type="term" value="F:collagen binding"/>
    <property type="evidence" value="ECO:0007669"/>
    <property type="project" value="InterPro"/>
</dbReference>
<dbReference type="GO" id="GO:0004867">
    <property type="term" value="F:serine-type endopeptidase inhibitor activity"/>
    <property type="evidence" value="ECO:0000318"/>
    <property type="project" value="GO_Central"/>
</dbReference>
<dbReference type="GO" id="GO:0051082">
    <property type="term" value="F:unfolded protein binding"/>
    <property type="evidence" value="ECO:0007669"/>
    <property type="project" value="Ensembl"/>
</dbReference>
<dbReference type="GO" id="GO:0003433">
    <property type="term" value="P:chondrocyte development involved in endochondral bone morphogenesis"/>
    <property type="evidence" value="ECO:0007669"/>
    <property type="project" value="Ensembl"/>
</dbReference>
<dbReference type="GO" id="GO:0032964">
    <property type="term" value="P:collagen biosynthetic process"/>
    <property type="evidence" value="ECO:0007669"/>
    <property type="project" value="Ensembl"/>
</dbReference>
<dbReference type="GO" id="GO:0030199">
    <property type="term" value="P:collagen fibril organization"/>
    <property type="evidence" value="ECO:0000318"/>
    <property type="project" value="GO_Central"/>
</dbReference>
<dbReference type="GO" id="GO:0051604">
    <property type="term" value="P:protein maturation"/>
    <property type="evidence" value="ECO:0007669"/>
    <property type="project" value="Ensembl"/>
</dbReference>
<dbReference type="CDD" id="cd02046">
    <property type="entry name" value="serpinH1_CBP1"/>
    <property type="match status" value="1"/>
</dbReference>
<dbReference type="FunFam" id="2.30.39.10:FF:000072">
    <property type="entry name" value="Serpin peptidase inhibitor, clade H (Heat shock protein 47), member 1, (Collagen binding protein 1)"/>
    <property type="match status" value="1"/>
</dbReference>
<dbReference type="FunFam" id="3.30.497.10:FF:000034">
    <property type="entry name" value="SERPINH1 isoform 13"/>
    <property type="match status" value="1"/>
</dbReference>
<dbReference type="Gene3D" id="2.30.39.10">
    <property type="entry name" value="Alpha-1-antitrypsin, domain 1"/>
    <property type="match status" value="1"/>
</dbReference>
<dbReference type="Gene3D" id="3.30.497.10">
    <property type="entry name" value="Antithrombin, subunit I, domain 2"/>
    <property type="match status" value="1"/>
</dbReference>
<dbReference type="InterPro" id="IPR023795">
    <property type="entry name" value="Serpin_CS"/>
</dbReference>
<dbReference type="InterPro" id="IPR023796">
    <property type="entry name" value="Serpin_dom"/>
</dbReference>
<dbReference type="InterPro" id="IPR000215">
    <property type="entry name" value="Serpin_fam"/>
</dbReference>
<dbReference type="InterPro" id="IPR033830">
    <property type="entry name" value="Serpin_H1_serpin_dom"/>
</dbReference>
<dbReference type="InterPro" id="IPR036186">
    <property type="entry name" value="Serpin_sf"/>
</dbReference>
<dbReference type="InterPro" id="IPR042178">
    <property type="entry name" value="Serpin_sf_1"/>
</dbReference>
<dbReference type="InterPro" id="IPR042185">
    <property type="entry name" value="Serpin_sf_2"/>
</dbReference>
<dbReference type="PANTHER" id="PTHR11461">
    <property type="entry name" value="SERINE PROTEASE INHIBITOR, SERPIN"/>
    <property type="match status" value="1"/>
</dbReference>
<dbReference type="PANTHER" id="PTHR11461:SF27">
    <property type="entry name" value="SERPIN H1"/>
    <property type="match status" value="1"/>
</dbReference>
<dbReference type="Pfam" id="PF00079">
    <property type="entry name" value="Serpin"/>
    <property type="match status" value="1"/>
</dbReference>
<dbReference type="SMART" id="SM00093">
    <property type="entry name" value="SERPIN"/>
    <property type="match status" value="1"/>
</dbReference>
<dbReference type="SUPFAM" id="SSF56574">
    <property type="entry name" value="Serpins"/>
    <property type="match status" value="1"/>
</dbReference>
<dbReference type="PROSITE" id="PS00014">
    <property type="entry name" value="ER_TARGET"/>
    <property type="match status" value="1"/>
</dbReference>
<dbReference type="PROSITE" id="PS00284">
    <property type="entry name" value="SERPIN"/>
    <property type="match status" value="1"/>
</dbReference>